<organism>
    <name type="scientific">Saccharolobus islandicus (strain M.16.27)</name>
    <name type="common">Sulfolobus islandicus</name>
    <dbReference type="NCBI Taxonomy" id="427318"/>
    <lineage>
        <taxon>Archaea</taxon>
        <taxon>Thermoproteota</taxon>
        <taxon>Thermoprotei</taxon>
        <taxon>Sulfolobales</taxon>
        <taxon>Sulfolobaceae</taxon>
        <taxon>Saccharolobus</taxon>
    </lineage>
</organism>
<comment type="similarity">
    <text evidence="1">Belongs to the UPF0200 family.</text>
</comment>
<proteinExistence type="inferred from homology"/>
<protein>
    <recommendedName>
        <fullName evidence="1">UPF0200 protein M1627_1244</fullName>
    </recommendedName>
</protein>
<dbReference type="EMBL" id="CP001401">
    <property type="protein sequence ID" value="ACP55131.1"/>
    <property type="molecule type" value="Genomic_DNA"/>
</dbReference>
<dbReference type="RefSeq" id="WP_009989191.1">
    <property type="nucleotide sequence ID" value="NC_012632.1"/>
</dbReference>
<dbReference type="SMR" id="C3N556"/>
<dbReference type="KEGG" id="sim:M1627_1244"/>
<dbReference type="HOGENOM" id="CLU_096329_1_0_2"/>
<dbReference type="Proteomes" id="UP000002307">
    <property type="component" value="Chromosome"/>
</dbReference>
<dbReference type="GO" id="GO:0005524">
    <property type="term" value="F:ATP binding"/>
    <property type="evidence" value="ECO:0007669"/>
    <property type="project" value="UniProtKB-UniRule"/>
</dbReference>
<dbReference type="CDD" id="cd02022">
    <property type="entry name" value="DPCK"/>
    <property type="match status" value="1"/>
</dbReference>
<dbReference type="Gene3D" id="3.40.50.300">
    <property type="entry name" value="P-loop containing nucleotide triphosphate hydrolases"/>
    <property type="match status" value="1"/>
</dbReference>
<dbReference type="HAMAP" id="MF_01111">
    <property type="entry name" value="UPF0200"/>
    <property type="match status" value="1"/>
</dbReference>
<dbReference type="InterPro" id="IPR022970">
    <property type="entry name" value="NTP_hydrolase-rel"/>
</dbReference>
<dbReference type="InterPro" id="IPR027417">
    <property type="entry name" value="P-loop_NTPase"/>
</dbReference>
<dbReference type="PANTHER" id="PTHR41930:SF1">
    <property type="entry name" value="DEPHOSPHO-COA KINASE"/>
    <property type="match status" value="1"/>
</dbReference>
<dbReference type="PANTHER" id="PTHR41930">
    <property type="entry name" value="UPF0200 PROTEIN MJ1399"/>
    <property type="match status" value="1"/>
</dbReference>
<dbReference type="Pfam" id="PF13238">
    <property type="entry name" value="AAA_18"/>
    <property type="match status" value="1"/>
</dbReference>
<dbReference type="SUPFAM" id="SSF52540">
    <property type="entry name" value="P-loop containing nucleoside triphosphate hydrolases"/>
    <property type="match status" value="1"/>
</dbReference>
<accession>C3N556</accession>
<keyword id="KW-0067">ATP-binding</keyword>
<keyword id="KW-0547">Nucleotide-binding</keyword>
<feature type="chain" id="PRO_1000213575" description="UPF0200 protein M1627_1244">
    <location>
        <begin position="1"/>
        <end position="188"/>
    </location>
</feature>
<feature type="binding site" evidence="1">
    <location>
        <begin position="15"/>
        <end position="22"/>
    </location>
    <ligand>
        <name>ATP</name>
        <dbReference type="ChEBI" id="CHEBI:30616"/>
    </ligand>
</feature>
<name>Y1244_SACI3</name>
<reference key="1">
    <citation type="journal article" date="2009" name="Proc. Natl. Acad. Sci. U.S.A.">
        <title>Biogeography of the Sulfolobus islandicus pan-genome.</title>
        <authorList>
            <person name="Reno M.L."/>
            <person name="Held N.L."/>
            <person name="Fields C.J."/>
            <person name="Burke P.V."/>
            <person name="Whitaker R.J."/>
        </authorList>
    </citation>
    <scope>NUCLEOTIDE SEQUENCE [LARGE SCALE GENOMIC DNA]</scope>
    <source>
        <strain>M.16.27</strain>
    </source>
</reference>
<gene>
    <name type="ordered locus">M1627_1244</name>
</gene>
<sequence length="188" mass="21485">MSYLVVTIKVILITGMPGSGKSEFAKLLKERGAKVIVMSDVVRKRYSIEAKPGERLMDFAKRLREIYGDGVVARLCVEELGTSNHDLVVFDGVRSLAEVEEFKRLLGDSVYIVAVHSPPKIRYKRMIERLRSDDSKEISELIRRDREELKLGIGEVIAMADYIITNDSNYEEFKRRCEEVTDRVLKNG</sequence>
<evidence type="ECO:0000255" key="1">
    <source>
        <dbReference type="HAMAP-Rule" id="MF_01111"/>
    </source>
</evidence>